<accession>B4ECT0</accession>
<keyword id="KW-0665">Pyrimidine biosynthesis</keyword>
<keyword id="KW-0808">Transferase</keyword>
<dbReference type="EC" id="2.1.3.2" evidence="1"/>
<dbReference type="EMBL" id="AM747720">
    <property type="protein sequence ID" value="CAR53462.1"/>
    <property type="molecule type" value="Genomic_DNA"/>
</dbReference>
<dbReference type="RefSeq" id="WP_006476735.1">
    <property type="nucleotide sequence ID" value="NC_011000.1"/>
</dbReference>
<dbReference type="SMR" id="B4ECT0"/>
<dbReference type="KEGG" id="bcj:BCAL3139"/>
<dbReference type="eggNOG" id="COG0540">
    <property type="taxonomic scope" value="Bacteria"/>
</dbReference>
<dbReference type="HOGENOM" id="CLU_043846_2_0_4"/>
<dbReference type="BioCyc" id="BCEN216591:G1G1V-3482-MONOMER"/>
<dbReference type="UniPathway" id="UPA00070">
    <property type="reaction ID" value="UER00116"/>
</dbReference>
<dbReference type="Proteomes" id="UP000001035">
    <property type="component" value="Chromosome 1"/>
</dbReference>
<dbReference type="GO" id="GO:0005829">
    <property type="term" value="C:cytosol"/>
    <property type="evidence" value="ECO:0007669"/>
    <property type="project" value="TreeGrafter"/>
</dbReference>
<dbReference type="GO" id="GO:0016597">
    <property type="term" value="F:amino acid binding"/>
    <property type="evidence" value="ECO:0007669"/>
    <property type="project" value="InterPro"/>
</dbReference>
<dbReference type="GO" id="GO:0004070">
    <property type="term" value="F:aspartate carbamoyltransferase activity"/>
    <property type="evidence" value="ECO:0007669"/>
    <property type="project" value="UniProtKB-UniRule"/>
</dbReference>
<dbReference type="GO" id="GO:0006207">
    <property type="term" value="P:'de novo' pyrimidine nucleobase biosynthetic process"/>
    <property type="evidence" value="ECO:0007669"/>
    <property type="project" value="InterPro"/>
</dbReference>
<dbReference type="GO" id="GO:0044205">
    <property type="term" value="P:'de novo' UMP biosynthetic process"/>
    <property type="evidence" value="ECO:0007669"/>
    <property type="project" value="UniProtKB-UniRule"/>
</dbReference>
<dbReference type="GO" id="GO:0006520">
    <property type="term" value="P:amino acid metabolic process"/>
    <property type="evidence" value="ECO:0007669"/>
    <property type="project" value="InterPro"/>
</dbReference>
<dbReference type="FunFam" id="3.40.50.1370:FF:000007">
    <property type="entry name" value="Aspartate carbamoyltransferase"/>
    <property type="match status" value="1"/>
</dbReference>
<dbReference type="Gene3D" id="3.40.50.1370">
    <property type="entry name" value="Aspartate/ornithine carbamoyltransferase"/>
    <property type="match status" value="2"/>
</dbReference>
<dbReference type="HAMAP" id="MF_00001">
    <property type="entry name" value="Asp_carb_tr"/>
    <property type="match status" value="1"/>
</dbReference>
<dbReference type="InterPro" id="IPR006132">
    <property type="entry name" value="Asp/Orn_carbamoyltranf_P-bd"/>
</dbReference>
<dbReference type="InterPro" id="IPR006130">
    <property type="entry name" value="Asp/Orn_carbamoylTrfase"/>
</dbReference>
<dbReference type="InterPro" id="IPR036901">
    <property type="entry name" value="Asp/Orn_carbamoylTrfase_sf"/>
</dbReference>
<dbReference type="InterPro" id="IPR002082">
    <property type="entry name" value="Asp_carbamoyltransf"/>
</dbReference>
<dbReference type="InterPro" id="IPR006131">
    <property type="entry name" value="Asp_carbamoyltransf_Asp/Orn-bd"/>
</dbReference>
<dbReference type="NCBIfam" id="TIGR00670">
    <property type="entry name" value="asp_carb_tr"/>
    <property type="match status" value="1"/>
</dbReference>
<dbReference type="NCBIfam" id="NF002032">
    <property type="entry name" value="PRK00856.1"/>
    <property type="match status" value="1"/>
</dbReference>
<dbReference type="PANTHER" id="PTHR45753:SF6">
    <property type="entry name" value="ASPARTATE CARBAMOYLTRANSFERASE"/>
    <property type="match status" value="1"/>
</dbReference>
<dbReference type="PANTHER" id="PTHR45753">
    <property type="entry name" value="ORNITHINE CARBAMOYLTRANSFERASE, MITOCHONDRIAL"/>
    <property type="match status" value="1"/>
</dbReference>
<dbReference type="Pfam" id="PF00185">
    <property type="entry name" value="OTCace"/>
    <property type="match status" value="1"/>
</dbReference>
<dbReference type="Pfam" id="PF02729">
    <property type="entry name" value="OTCace_N"/>
    <property type="match status" value="1"/>
</dbReference>
<dbReference type="PRINTS" id="PR00100">
    <property type="entry name" value="AOTCASE"/>
</dbReference>
<dbReference type="PRINTS" id="PR00101">
    <property type="entry name" value="ATCASE"/>
</dbReference>
<dbReference type="SUPFAM" id="SSF53671">
    <property type="entry name" value="Aspartate/ornithine carbamoyltransferase"/>
    <property type="match status" value="1"/>
</dbReference>
<dbReference type="PROSITE" id="PS00097">
    <property type="entry name" value="CARBAMOYLTRANSFERASE"/>
    <property type="match status" value="1"/>
</dbReference>
<protein>
    <recommendedName>
        <fullName evidence="1">Aspartate carbamoyltransferase catalytic subunit</fullName>
        <ecNumber evidence="1">2.1.3.2</ecNumber>
    </recommendedName>
    <alternativeName>
        <fullName evidence="1">Aspartate transcarbamylase</fullName>
        <shortName evidence="1">ATCase</shortName>
    </alternativeName>
</protein>
<name>PYRB_BURCJ</name>
<reference key="1">
    <citation type="journal article" date="2009" name="J. Bacteriol.">
        <title>The genome of Burkholderia cenocepacia J2315, an epidemic pathogen of cystic fibrosis patients.</title>
        <authorList>
            <person name="Holden M.T."/>
            <person name="Seth-Smith H.M."/>
            <person name="Crossman L.C."/>
            <person name="Sebaihia M."/>
            <person name="Bentley S.D."/>
            <person name="Cerdeno-Tarraga A.M."/>
            <person name="Thomson N.R."/>
            <person name="Bason N."/>
            <person name="Quail M.A."/>
            <person name="Sharp S."/>
            <person name="Cherevach I."/>
            <person name="Churcher C."/>
            <person name="Goodhead I."/>
            <person name="Hauser H."/>
            <person name="Holroyd N."/>
            <person name="Mungall K."/>
            <person name="Scott P."/>
            <person name="Walker D."/>
            <person name="White B."/>
            <person name="Rose H."/>
            <person name="Iversen P."/>
            <person name="Mil-Homens D."/>
            <person name="Rocha E.P."/>
            <person name="Fialho A.M."/>
            <person name="Baldwin A."/>
            <person name="Dowson C."/>
            <person name="Barrell B.G."/>
            <person name="Govan J.R."/>
            <person name="Vandamme P."/>
            <person name="Hart C.A."/>
            <person name="Mahenthiralingam E."/>
            <person name="Parkhill J."/>
        </authorList>
    </citation>
    <scope>NUCLEOTIDE SEQUENCE [LARGE SCALE GENOMIC DNA]</scope>
    <source>
        <strain>ATCC BAA-245 / DSM 16553 / LMG 16656 / NCTC 13227 / J2315 / CF5610</strain>
    </source>
</reference>
<organism>
    <name type="scientific">Burkholderia cenocepacia (strain ATCC BAA-245 / DSM 16553 / LMG 16656 / NCTC 13227 / J2315 / CF5610)</name>
    <name type="common">Burkholderia cepacia (strain J2315)</name>
    <dbReference type="NCBI Taxonomy" id="216591"/>
    <lineage>
        <taxon>Bacteria</taxon>
        <taxon>Pseudomonadati</taxon>
        <taxon>Pseudomonadota</taxon>
        <taxon>Betaproteobacteria</taxon>
        <taxon>Burkholderiales</taxon>
        <taxon>Burkholderiaceae</taxon>
        <taxon>Burkholderia</taxon>
        <taxon>Burkholderia cepacia complex</taxon>
    </lineage>
</organism>
<feature type="chain" id="PRO_1000088743" description="Aspartate carbamoyltransferase catalytic subunit">
    <location>
        <begin position="1"/>
        <end position="343"/>
    </location>
</feature>
<feature type="binding site" evidence="1">
    <location>
        <position position="91"/>
    </location>
    <ligand>
        <name>carbamoyl phosphate</name>
        <dbReference type="ChEBI" id="CHEBI:58228"/>
    </ligand>
</feature>
<feature type="binding site" evidence="1">
    <location>
        <position position="92"/>
    </location>
    <ligand>
        <name>carbamoyl phosphate</name>
        <dbReference type="ChEBI" id="CHEBI:58228"/>
    </ligand>
</feature>
<feature type="binding site" evidence="1">
    <location>
        <position position="119"/>
    </location>
    <ligand>
        <name>L-aspartate</name>
        <dbReference type="ChEBI" id="CHEBI:29991"/>
    </ligand>
</feature>
<feature type="binding site" evidence="1">
    <location>
        <position position="141"/>
    </location>
    <ligand>
        <name>carbamoyl phosphate</name>
        <dbReference type="ChEBI" id="CHEBI:58228"/>
    </ligand>
</feature>
<feature type="binding site" evidence="1">
    <location>
        <position position="171"/>
    </location>
    <ligand>
        <name>carbamoyl phosphate</name>
        <dbReference type="ChEBI" id="CHEBI:58228"/>
    </ligand>
</feature>
<feature type="binding site" evidence="1">
    <location>
        <position position="174"/>
    </location>
    <ligand>
        <name>carbamoyl phosphate</name>
        <dbReference type="ChEBI" id="CHEBI:58228"/>
    </ligand>
</feature>
<feature type="binding site" evidence="1">
    <location>
        <position position="204"/>
    </location>
    <ligand>
        <name>L-aspartate</name>
        <dbReference type="ChEBI" id="CHEBI:29991"/>
    </ligand>
</feature>
<feature type="binding site" evidence="1">
    <location>
        <position position="259"/>
    </location>
    <ligand>
        <name>L-aspartate</name>
        <dbReference type="ChEBI" id="CHEBI:29991"/>
    </ligand>
</feature>
<feature type="binding site" evidence="1">
    <location>
        <position position="300"/>
    </location>
    <ligand>
        <name>carbamoyl phosphate</name>
        <dbReference type="ChEBI" id="CHEBI:58228"/>
    </ligand>
</feature>
<feature type="binding site" evidence="1">
    <location>
        <position position="301"/>
    </location>
    <ligand>
        <name>carbamoyl phosphate</name>
        <dbReference type="ChEBI" id="CHEBI:58228"/>
    </ligand>
</feature>
<proteinExistence type="inferred from homology"/>
<comment type="function">
    <text evidence="1">Catalyzes the condensation of carbamoyl phosphate and aspartate to form carbamoyl aspartate and inorganic phosphate, the committed step in the de novo pyrimidine nucleotide biosynthesis pathway.</text>
</comment>
<comment type="catalytic activity">
    <reaction evidence="1">
        <text>carbamoyl phosphate + L-aspartate = N-carbamoyl-L-aspartate + phosphate + H(+)</text>
        <dbReference type="Rhea" id="RHEA:20013"/>
        <dbReference type="ChEBI" id="CHEBI:15378"/>
        <dbReference type="ChEBI" id="CHEBI:29991"/>
        <dbReference type="ChEBI" id="CHEBI:32814"/>
        <dbReference type="ChEBI" id="CHEBI:43474"/>
        <dbReference type="ChEBI" id="CHEBI:58228"/>
        <dbReference type="EC" id="2.1.3.2"/>
    </reaction>
</comment>
<comment type="pathway">
    <text evidence="1">Pyrimidine metabolism; UMP biosynthesis via de novo pathway; (S)-dihydroorotate from bicarbonate: step 2/3.</text>
</comment>
<comment type="subunit">
    <text evidence="1">Heterododecamer (2C3:3R2) of six catalytic PyrB chains organized as two trimers (C3), and six regulatory PyrI chains organized as three dimers (R2).</text>
</comment>
<comment type="similarity">
    <text evidence="1">Belongs to the aspartate/ornithine carbamoyltransferase superfamily. ATCase family.</text>
</comment>
<evidence type="ECO:0000255" key="1">
    <source>
        <dbReference type="HAMAP-Rule" id="MF_00001"/>
    </source>
</evidence>
<gene>
    <name evidence="1" type="primary">pyrB</name>
    <name type="ordered locus">BceJ2315_30840</name>
    <name type="ORF">BCAL3139</name>
</gene>
<sequence length="343" mass="37286">MTTDTTGRTGNPAAAASPDRFRYGFLKGNPQLTKNGELKHLLSIEGLPRSIVNHILDTAEQFVSVTDREVKKVPLLRGKSVFNLFFENSTRTRTTFEIAATRLSADVLNLNINASSTSKGESLLDTINNLSAMHADLFVVRHASSGAPYLIAEHCAPHVHVINAGDGRHAHPTQGLLDMYTIRHYKRDFTKLRVAIVGDILHSRVARSDIHALTTLGVPEVRAIGPRTLLPGGLEQMGVKVFHNLDEGLKGVDVIIMLRLQNERMSGALLPSAQEYFKTWGLTPERLALAAPDAIVMHPGPMNRGVEIDSQVADGPQSVILNQVTFGIAVRMAVMGIVAGNSD</sequence>